<proteinExistence type="evidence at protein level"/>
<name>FADB_PSEFR</name>
<reference key="1">
    <citation type="journal article" date="1992" name="J. Biochem.">
        <title>Primary structures of the genes, faoA and faoB, from Pseudomonas fragi B-0771 which encode the two subunits of the HDT multienzyme complex involved in fatty acid beta-oxidation.</title>
        <authorList>
            <person name="Sato S."/>
            <person name="Hayashi M."/>
            <person name="Imamura S."/>
            <person name="Ozeki Y."/>
            <person name="Kawaguchi A."/>
        </authorList>
    </citation>
    <scope>NUCLEOTIDE SEQUENCE [GENOMIC DNA]</scope>
    <scope>PARTIAL PROTEIN SEQUENCE</scope>
    <source>
        <strain>B-0771</strain>
    </source>
</reference>
<reference key="2">
    <citation type="journal article" date="1994" name="J. Biochem.">
        <title>Transcription of the faoAB operon which encodes the HDT multienzyme complex involved in fatty acid beta-oxidation in Pseudomonas fragi B-0771.</title>
        <authorList>
            <person name="Sato S."/>
            <person name="Ozeki Y."/>
            <person name="Kawaguchi A."/>
        </authorList>
    </citation>
    <scope>INDUCTION</scope>
</reference>
<reference key="3">
    <citation type="journal article" date="2004" name="EMBO J.">
        <title>Structural basis for channelling mechanism of a fatty acid beta-oxidation multienzyme complex.</title>
        <authorList>
            <person name="Ishikawa M."/>
            <person name="Tsuchiya D."/>
            <person name="Oyama T."/>
            <person name="Tsunaka Y."/>
            <person name="Morikawa K."/>
        </authorList>
    </citation>
    <scope>X-RAY CRYSTALLOGRAPHY (2.5 ANGSTROMS) IN COMPLEXES WITH NAD AND ACYL-COENZYME A</scope>
    <scope>SUBUNIT</scope>
</reference>
<sequence>MIYEGKAITVTALESGIVELKFDLKGESVNKFNRLTLNELRQAVDAIKADASVKGVIVSSGKDVFIVGADITEFVENFKLPDAELIAGNLEANKIFSDFEDLNVPTVAAINGIALGGGLEMCLAADFRVMADSAKIGLPEVKLGIYPGFGGTVRLPRLIGVDNAVEWIASGKENRAEDALKVSAVDAVVTADKLGAAALDLIKRAISGELDYKAKRQPKLEKLKLNAIEQMMAFETAKGFVAGQAGPNYPAPVEAIKTIQKAANFGRDKALEVEAAGFAKLAKTSASNCLIGLFLNDQELKKKAKVYDKIAKDVKQAAVLGAGIMGGGIAYQSASKGTPILMKDINEHGIEQGLAEAAKLLVGRVDKGRMTPAKMAEVLNGIRPTLSYGDFGNVDLVVEAVVENPKVKQAVLAEVENHVREDAILASNTSTISISLLAKALKRPENFVGMHFFNPVHMMPLVEVIRGEKSSDLAVATTVAYAKKMGKNPIVVNDCPGFLVNRVLFPYFGGFAKLVSAGVDFVRIDKVMEKFGWPMGPAYLMDVVGIDTGHHGRDVMAEGFPDRMKDDRRSAIDALYEAKRLGQKNGKGFYAYEADKKGKQKKLVDSSVLEVLKPIVYEQRDVTDEDIINWMMIPLCLETVRCLEDGIVETAAEADMGLVYGIGFPLFRGGALRYIDSIGVAEFVALADQYAELGALYHPTAKLREMAKNGQSFFG</sequence>
<comment type="function">
    <text evidence="1">Involved in the aerobic and anaerobic degradation of long-chain fatty acids via beta-oxidation cycle. Catalyzes the formation of 3-oxoacyl-CoA from enoyl-CoA via L-3-hydroxyacyl-CoA. It can also use D-3-hydroxyacyl-CoA and cis-3-enoyl-CoA as substrate.</text>
</comment>
<comment type="catalytic activity">
    <reaction evidence="1">
        <text>a (3S)-3-hydroxyacyl-CoA + NAD(+) = a 3-oxoacyl-CoA + NADH + H(+)</text>
        <dbReference type="Rhea" id="RHEA:22432"/>
        <dbReference type="ChEBI" id="CHEBI:15378"/>
        <dbReference type="ChEBI" id="CHEBI:57318"/>
        <dbReference type="ChEBI" id="CHEBI:57540"/>
        <dbReference type="ChEBI" id="CHEBI:57945"/>
        <dbReference type="ChEBI" id="CHEBI:90726"/>
        <dbReference type="EC" id="1.1.1.35"/>
    </reaction>
</comment>
<comment type="catalytic activity">
    <reaction evidence="1">
        <text>a (3S)-3-hydroxyacyl-CoA = a (2E)-enoyl-CoA + H2O</text>
        <dbReference type="Rhea" id="RHEA:16105"/>
        <dbReference type="ChEBI" id="CHEBI:15377"/>
        <dbReference type="ChEBI" id="CHEBI:57318"/>
        <dbReference type="ChEBI" id="CHEBI:58856"/>
        <dbReference type="EC" id="4.2.1.17"/>
    </reaction>
</comment>
<comment type="catalytic activity">
    <reaction evidence="1">
        <text>a 4-saturated-(3S)-3-hydroxyacyl-CoA = a (3E)-enoyl-CoA + H2O</text>
        <dbReference type="Rhea" id="RHEA:20724"/>
        <dbReference type="ChEBI" id="CHEBI:15377"/>
        <dbReference type="ChEBI" id="CHEBI:58521"/>
        <dbReference type="ChEBI" id="CHEBI:137480"/>
        <dbReference type="EC" id="4.2.1.17"/>
    </reaction>
</comment>
<comment type="catalytic activity">
    <reaction evidence="1">
        <text>(3S)-3-hydroxybutanoyl-CoA = (3R)-3-hydroxybutanoyl-CoA</text>
        <dbReference type="Rhea" id="RHEA:21760"/>
        <dbReference type="ChEBI" id="CHEBI:57315"/>
        <dbReference type="ChEBI" id="CHEBI:57316"/>
        <dbReference type="EC" id="5.1.2.3"/>
    </reaction>
</comment>
<comment type="catalytic activity">
    <reaction evidence="1">
        <text>a (3Z)-enoyl-CoA = a 4-saturated (2E)-enoyl-CoA</text>
        <dbReference type="Rhea" id="RHEA:45900"/>
        <dbReference type="ChEBI" id="CHEBI:85097"/>
        <dbReference type="ChEBI" id="CHEBI:85489"/>
        <dbReference type="EC" id="5.3.3.8"/>
    </reaction>
</comment>
<comment type="catalytic activity">
    <reaction evidence="1">
        <text>a (3E)-enoyl-CoA = a 4-saturated (2E)-enoyl-CoA</text>
        <dbReference type="Rhea" id="RHEA:45228"/>
        <dbReference type="ChEBI" id="CHEBI:58521"/>
        <dbReference type="ChEBI" id="CHEBI:85097"/>
        <dbReference type="EC" id="5.3.3.8"/>
    </reaction>
</comment>
<comment type="pathway">
    <text evidence="1">Lipid metabolism; fatty acid beta-oxidation.</text>
</comment>
<comment type="subunit">
    <text evidence="1 2">Heterotetramer of two alpha chains (FadB) and two beta chains (FadA).</text>
</comment>
<comment type="interaction">
    <interactant intactId="EBI-1039318">
        <id>P28793</id>
    </interactant>
    <interactant intactId="EBI-1039311">
        <id>P28790</id>
        <label>fadA</label>
    </interactant>
    <organismsDiffer>false</organismsDiffer>
    <experiments>4</experiments>
</comment>
<comment type="induction">
    <text evidence="3">By palmitic acid.</text>
</comment>
<comment type="similarity">
    <text evidence="1">In the N-terminal section; belongs to the enoyl-CoA hydratase/isomerase family.</text>
</comment>
<comment type="similarity">
    <text evidence="1">In the C-terminal section; belongs to the 3-hydroxyacyl-CoA dehydrogenase family.</text>
</comment>
<gene>
    <name evidence="1" type="primary">fadB</name>
    <name type="synonym">faoA</name>
</gene>
<feature type="chain" id="PRO_0000109276" description="Fatty acid oxidation complex subunit alpha">
    <location>
        <begin position="1"/>
        <end position="715"/>
    </location>
</feature>
<feature type="region of interest" description="Enoyl-CoA hydratase/isomerase" evidence="1">
    <location>
        <begin position="1"/>
        <end position="190"/>
    </location>
</feature>
<feature type="region of interest" description="3-hydroxyacyl-CoA dehydrogenase" evidence="1">
    <location>
        <begin position="312"/>
        <end position="715"/>
    </location>
</feature>
<feature type="active site" description="For 3-hydroxyacyl-CoA dehydrogenase activity" evidence="1">
    <location>
        <position position="451"/>
    </location>
</feature>
<feature type="binding site" evidence="2">
    <location>
        <position position="297"/>
    </location>
    <ligand>
        <name>substrate</name>
    </ligand>
</feature>
<feature type="binding site" evidence="2">
    <location>
        <position position="325"/>
    </location>
    <ligand>
        <name>NAD(+)</name>
        <dbReference type="ChEBI" id="CHEBI:57540"/>
    </ligand>
</feature>
<feature type="binding site" evidence="2">
    <location>
        <position position="344"/>
    </location>
    <ligand>
        <name>NAD(+)</name>
        <dbReference type="ChEBI" id="CHEBI:57540"/>
    </ligand>
</feature>
<feature type="binding site" evidence="2">
    <location>
        <begin position="401"/>
        <end position="403"/>
    </location>
    <ligand>
        <name>NAD(+)</name>
        <dbReference type="ChEBI" id="CHEBI:57540"/>
    </ligand>
</feature>
<feature type="binding site" evidence="2">
    <location>
        <position position="408"/>
    </location>
    <ligand>
        <name>NAD(+)</name>
        <dbReference type="ChEBI" id="CHEBI:57540"/>
    </ligand>
</feature>
<feature type="binding site" evidence="2">
    <location>
        <position position="430"/>
    </location>
    <ligand>
        <name>NAD(+)</name>
        <dbReference type="ChEBI" id="CHEBI:57540"/>
    </ligand>
</feature>
<feature type="binding site" evidence="2">
    <location>
        <position position="454"/>
    </location>
    <ligand>
        <name>NAD(+)</name>
        <dbReference type="ChEBI" id="CHEBI:57540"/>
    </ligand>
</feature>
<feature type="binding site" evidence="2">
    <location>
        <position position="501"/>
    </location>
    <ligand>
        <name>substrate</name>
    </ligand>
</feature>
<feature type="binding site" evidence="2">
    <location>
        <position position="660"/>
    </location>
    <ligand>
        <name>substrate</name>
    </ligand>
</feature>
<feature type="site" description="Important for catalytic activity" evidence="1">
    <location>
        <position position="120"/>
    </location>
</feature>
<feature type="site" description="Important for catalytic activity" evidence="1">
    <location>
        <position position="140"/>
    </location>
</feature>
<feature type="strand" evidence="4">
    <location>
        <begin position="6"/>
        <end position="12"/>
    </location>
</feature>
<feature type="helix" evidence="4">
    <location>
        <begin position="14"/>
        <end position="16"/>
    </location>
</feature>
<feature type="strand" evidence="4">
    <location>
        <begin position="17"/>
        <end position="22"/>
    </location>
</feature>
<feature type="strand" evidence="4">
    <location>
        <begin position="27"/>
        <end position="29"/>
    </location>
</feature>
<feature type="helix" evidence="4">
    <location>
        <begin position="34"/>
        <end position="49"/>
    </location>
</feature>
<feature type="strand" evidence="4">
    <location>
        <begin position="55"/>
        <end position="67"/>
    </location>
</feature>
<feature type="helix" evidence="4">
    <location>
        <begin position="71"/>
        <end position="77"/>
    </location>
</feature>
<feature type="helix" evidence="4">
    <location>
        <begin position="82"/>
        <end position="100"/>
    </location>
</feature>
<feature type="strand" evidence="4">
    <location>
        <begin position="106"/>
        <end position="110"/>
    </location>
</feature>
<feature type="helix" evidence="4">
    <location>
        <begin position="117"/>
        <end position="123"/>
    </location>
</feature>
<feature type="strand" evidence="4">
    <location>
        <begin position="125"/>
        <end position="131"/>
    </location>
</feature>
<feature type="strand" evidence="4">
    <location>
        <begin position="135"/>
        <end position="137"/>
    </location>
</feature>
<feature type="helix" evidence="4">
    <location>
        <begin position="139"/>
        <end position="143"/>
    </location>
</feature>
<feature type="turn" evidence="6">
    <location>
        <begin position="148"/>
        <end position="150"/>
    </location>
</feature>
<feature type="helix" evidence="4">
    <location>
        <begin position="151"/>
        <end position="159"/>
    </location>
</feature>
<feature type="helix" evidence="4">
    <location>
        <begin position="161"/>
        <end position="170"/>
    </location>
</feature>
<feature type="strand" evidence="5">
    <location>
        <begin position="173"/>
        <end position="175"/>
    </location>
</feature>
<feature type="helix" evidence="4">
    <location>
        <begin position="176"/>
        <end position="181"/>
    </location>
</feature>
<feature type="strand" evidence="4">
    <location>
        <begin position="184"/>
        <end position="189"/>
    </location>
</feature>
<feature type="helix" evidence="4">
    <location>
        <begin position="191"/>
        <end position="193"/>
    </location>
</feature>
<feature type="helix" evidence="4">
    <location>
        <begin position="194"/>
        <end position="206"/>
    </location>
</feature>
<feature type="strand" evidence="6">
    <location>
        <begin position="207"/>
        <end position="210"/>
    </location>
</feature>
<feature type="helix" evidence="4">
    <location>
        <begin position="212"/>
        <end position="216"/>
    </location>
</feature>
<feature type="helix" evidence="4">
    <location>
        <begin position="217"/>
        <end position="220"/>
    </location>
</feature>
<feature type="helix" evidence="4">
    <location>
        <begin position="227"/>
        <end position="245"/>
    </location>
</feature>
<feature type="helix" evidence="4">
    <location>
        <begin position="250"/>
        <end position="262"/>
    </location>
</feature>
<feature type="helix" evidence="4">
    <location>
        <begin position="267"/>
        <end position="282"/>
    </location>
</feature>
<feature type="helix" evidence="4">
    <location>
        <begin position="285"/>
        <end position="308"/>
    </location>
</feature>
<feature type="strand" evidence="4">
    <location>
        <begin position="315"/>
        <end position="320"/>
    </location>
</feature>
<feature type="helix" evidence="4">
    <location>
        <begin position="323"/>
        <end position="335"/>
    </location>
</feature>
<feature type="strand" evidence="4">
    <location>
        <begin position="340"/>
        <end position="343"/>
    </location>
</feature>
<feature type="helix" evidence="4">
    <location>
        <begin position="347"/>
        <end position="365"/>
    </location>
</feature>
<feature type="turn" evidence="4">
    <location>
        <begin position="366"/>
        <end position="368"/>
    </location>
</feature>
<feature type="helix" evidence="4">
    <location>
        <begin position="372"/>
        <end position="381"/>
    </location>
</feature>
<feature type="strand" evidence="4">
    <location>
        <begin position="382"/>
        <end position="388"/>
    </location>
</feature>
<feature type="helix" evidence="4">
    <location>
        <begin position="391"/>
        <end position="393"/>
    </location>
</feature>
<feature type="strand" evidence="4">
    <location>
        <begin position="395"/>
        <end position="399"/>
    </location>
</feature>
<feature type="helix" evidence="4">
    <location>
        <begin position="405"/>
        <end position="416"/>
    </location>
</feature>
<feature type="strand" evidence="4">
    <location>
        <begin position="424"/>
        <end position="427"/>
    </location>
</feature>
<feature type="strand" evidence="4">
    <location>
        <begin position="430"/>
        <end position="432"/>
    </location>
</feature>
<feature type="helix" evidence="4">
    <location>
        <begin position="434"/>
        <end position="437"/>
    </location>
</feature>
<feature type="helix" evidence="4">
    <location>
        <begin position="438"/>
        <end position="440"/>
    </location>
</feature>
<feature type="helix" evidence="4">
    <location>
        <begin position="444"/>
        <end position="446"/>
    </location>
</feature>
<feature type="strand" evidence="4">
    <location>
        <begin position="447"/>
        <end position="451"/>
    </location>
</feature>
<feature type="turn" evidence="4">
    <location>
        <begin position="456"/>
        <end position="458"/>
    </location>
</feature>
<feature type="strand" evidence="4">
    <location>
        <begin position="461"/>
        <end position="466"/>
    </location>
</feature>
<feature type="helix" evidence="4">
    <location>
        <begin position="472"/>
        <end position="484"/>
    </location>
</feature>
<feature type="strand" evidence="4">
    <location>
        <begin position="488"/>
        <end position="494"/>
    </location>
</feature>
<feature type="turn" evidence="4">
    <location>
        <begin position="496"/>
        <end position="499"/>
    </location>
</feature>
<feature type="helix" evidence="4">
    <location>
        <begin position="500"/>
        <end position="516"/>
    </location>
</feature>
<feature type="helix" evidence="4">
    <location>
        <begin position="521"/>
        <end position="531"/>
    </location>
</feature>
<feature type="helix" evidence="4">
    <location>
        <begin position="537"/>
        <end position="544"/>
    </location>
</feature>
<feature type="helix" evidence="4">
    <location>
        <begin position="546"/>
        <end position="559"/>
    </location>
</feature>
<feature type="helix" evidence="4">
    <location>
        <begin position="561"/>
        <end position="564"/>
    </location>
</feature>
<feature type="helix" evidence="4">
    <location>
        <begin position="571"/>
        <end position="577"/>
    </location>
</feature>
<feature type="turn" evidence="4">
    <location>
        <begin position="583"/>
        <end position="586"/>
    </location>
</feature>
<feature type="strand" evidence="4">
    <location>
        <begin position="587"/>
        <end position="592"/>
    </location>
</feature>
<feature type="strand" evidence="5">
    <location>
        <begin position="599"/>
        <end position="603"/>
    </location>
</feature>
<feature type="helix" evidence="4">
    <location>
        <begin position="607"/>
        <end position="612"/>
    </location>
</feature>
<feature type="helix" evidence="4">
    <location>
        <begin position="613"/>
        <end position="615"/>
    </location>
</feature>
<feature type="helix" evidence="4">
    <location>
        <begin position="624"/>
        <end position="644"/>
    </location>
</feature>
<feature type="strand" evidence="4">
    <location>
        <begin position="647"/>
        <end position="650"/>
    </location>
</feature>
<feature type="helix" evidence="4">
    <location>
        <begin position="651"/>
        <end position="661"/>
    </location>
</feature>
<feature type="helix" evidence="4">
    <location>
        <begin position="666"/>
        <end position="668"/>
    </location>
</feature>
<feature type="helix" evidence="4">
    <location>
        <begin position="671"/>
        <end position="678"/>
    </location>
</feature>
<feature type="helix" evidence="4">
    <location>
        <begin position="680"/>
        <end position="689"/>
    </location>
</feature>
<feature type="helix" evidence="4">
    <location>
        <begin position="690"/>
        <end position="693"/>
    </location>
</feature>
<feature type="helix" evidence="4">
    <location>
        <begin position="695"/>
        <end position="697"/>
    </location>
</feature>
<feature type="helix" evidence="4">
    <location>
        <begin position="701"/>
        <end position="708"/>
    </location>
</feature>
<accession>P28793</accession>
<keyword id="KW-0002">3D-structure</keyword>
<keyword id="KW-0903">Direct protein sequencing</keyword>
<keyword id="KW-0276">Fatty acid metabolism</keyword>
<keyword id="KW-0413">Isomerase</keyword>
<keyword id="KW-0442">Lipid degradation</keyword>
<keyword id="KW-0443">Lipid metabolism</keyword>
<keyword id="KW-0456">Lyase</keyword>
<keyword id="KW-0511">Multifunctional enzyme</keyword>
<keyword id="KW-0520">NAD</keyword>
<keyword id="KW-0560">Oxidoreductase</keyword>
<evidence type="ECO:0000255" key="1">
    <source>
        <dbReference type="HAMAP-Rule" id="MF_01621"/>
    </source>
</evidence>
<evidence type="ECO:0000269" key="2">
    <source>
    </source>
</evidence>
<evidence type="ECO:0000269" key="3">
    <source>
    </source>
</evidence>
<evidence type="ECO:0007829" key="4">
    <source>
        <dbReference type="PDB" id="1WDK"/>
    </source>
</evidence>
<evidence type="ECO:0007829" key="5">
    <source>
        <dbReference type="PDB" id="1WDL"/>
    </source>
</evidence>
<evidence type="ECO:0007829" key="6">
    <source>
        <dbReference type="PDB" id="2D3T"/>
    </source>
</evidence>
<protein>
    <recommendedName>
        <fullName evidence="1">Fatty acid oxidation complex subunit alpha</fullName>
    </recommendedName>
    <domain>
        <recommendedName>
            <fullName evidence="1">Enoyl-CoA hydratase/Delta(3)-cis-Delta(2)-trans-enoyl-CoA isomerase/3-hydroxybutyryl-CoA epimerase</fullName>
            <ecNumber evidence="1">4.2.1.17</ecNumber>
            <ecNumber evidence="1">5.1.2.3</ecNumber>
            <ecNumber evidence="1">5.3.3.8</ecNumber>
        </recommendedName>
    </domain>
    <domain>
        <recommendedName>
            <fullName evidence="1">3-hydroxyacyl-CoA dehydrogenase</fullName>
            <ecNumber evidence="1">1.1.1.35</ecNumber>
        </recommendedName>
    </domain>
</protein>
<organism>
    <name type="scientific">Pseudomonas fragi</name>
    <dbReference type="NCBI Taxonomy" id="296"/>
    <lineage>
        <taxon>Bacteria</taxon>
        <taxon>Pseudomonadati</taxon>
        <taxon>Pseudomonadota</taxon>
        <taxon>Gammaproteobacteria</taxon>
        <taxon>Pseudomonadales</taxon>
        <taxon>Pseudomonadaceae</taxon>
        <taxon>Pseudomonas</taxon>
    </lineage>
</organism>
<dbReference type="EC" id="4.2.1.17" evidence="1"/>
<dbReference type="EC" id="5.1.2.3" evidence="1"/>
<dbReference type="EC" id="5.3.3.8" evidence="1"/>
<dbReference type="EC" id="1.1.1.35" evidence="1"/>
<dbReference type="EMBL" id="D10390">
    <property type="protein sequence ID" value="BAA01227.1"/>
    <property type="molecule type" value="Genomic_DNA"/>
</dbReference>
<dbReference type="PIR" id="JX0199">
    <property type="entry name" value="JX0199"/>
</dbReference>
<dbReference type="RefSeq" id="WP_016780046.1">
    <property type="nucleotide sequence ID" value="NZ_SDUZ01000007.1"/>
</dbReference>
<dbReference type="PDB" id="1WDK">
    <property type="method" value="X-ray"/>
    <property type="resolution" value="2.50 A"/>
    <property type="chains" value="A/B=1-715"/>
</dbReference>
<dbReference type="PDB" id="1WDL">
    <property type="method" value="X-ray"/>
    <property type="resolution" value="3.50 A"/>
    <property type="chains" value="A/B=1-715"/>
</dbReference>
<dbReference type="PDB" id="1WDM">
    <property type="method" value="X-ray"/>
    <property type="resolution" value="3.80 A"/>
    <property type="chains" value="A/B=1-715"/>
</dbReference>
<dbReference type="PDB" id="2D3T">
    <property type="method" value="X-ray"/>
    <property type="resolution" value="3.40 A"/>
    <property type="chains" value="A/B=1-715"/>
</dbReference>
<dbReference type="PDBsum" id="1WDK"/>
<dbReference type="PDBsum" id="1WDL"/>
<dbReference type="PDBsum" id="1WDM"/>
<dbReference type="PDBsum" id="2D3T"/>
<dbReference type="SMR" id="P28793"/>
<dbReference type="DIP" id="DIP-29089N"/>
<dbReference type="IntAct" id="P28793">
    <property type="interactions" value="1"/>
</dbReference>
<dbReference type="STRING" id="296.B6D87_06985"/>
<dbReference type="DrugBank" id="DB08249">
    <property type="generic name" value="3,6,9,12,15-PENTAOXATRICOSAN-1-OL"/>
</dbReference>
<dbReference type="GeneID" id="72389476"/>
<dbReference type="eggNOG" id="COG1024">
    <property type="taxonomic scope" value="Bacteria"/>
</dbReference>
<dbReference type="eggNOG" id="COG1250">
    <property type="taxonomic scope" value="Bacteria"/>
</dbReference>
<dbReference type="OrthoDB" id="5389341at2"/>
<dbReference type="UniPathway" id="UPA00659"/>
<dbReference type="EvolutionaryTrace" id="P28793"/>
<dbReference type="GO" id="GO:0036125">
    <property type="term" value="C:fatty acid beta-oxidation multienzyme complex"/>
    <property type="evidence" value="ECO:0007669"/>
    <property type="project" value="InterPro"/>
</dbReference>
<dbReference type="GO" id="GO:0008692">
    <property type="term" value="F:3-hydroxybutyryl-CoA epimerase activity"/>
    <property type="evidence" value="ECO:0007669"/>
    <property type="project" value="UniProtKB-UniRule"/>
</dbReference>
<dbReference type="GO" id="GO:0004165">
    <property type="term" value="F:delta(3)-delta(2)-enoyl-CoA isomerase activity"/>
    <property type="evidence" value="ECO:0007669"/>
    <property type="project" value="UniProtKB-UniRule"/>
</dbReference>
<dbReference type="GO" id="GO:0004300">
    <property type="term" value="F:enoyl-CoA hydratase activity"/>
    <property type="evidence" value="ECO:0007669"/>
    <property type="project" value="UniProtKB-UniRule"/>
</dbReference>
<dbReference type="GO" id="GO:0016509">
    <property type="term" value="F:long-chain-3-hydroxyacyl-CoA dehydrogenase activity"/>
    <property type="evidence" value="ECO:0007669"/>
    <property type="project" value="TreeGrafter"/>
</dbReference>
<dbReference type="GO" id="GO:0070403">
    <property type="term" value="F:NAD+ binding"/>
    <property type="evidence" value="ECO:0007669"/>
    <property type="project" value="InterPro"/>
</dbReference>
<dbReference type="GO" id="GO:0006635">
    <property type="term" value="P:fatty acid beta-oxidation"/>
    <property type="evidence" value="ECO:0007669"/>
    <property type="project" value="UniProtKB-UniRule"/>
</dbReference>
<dbReference type="CDD" id="cd06558">
    <property type="entry name" value="crotonase-like"/>
    <property type="match status" value="1"/>
</dbReference>
<dbReference type="FunFam" id="1.10.1040.50:FF:000001">
    <property type="entry name" value="Fatty acid oxidation complex subunit alpha"/>
    <property type="match status" value="1"/>
</dbReference>
<dbReference type="FunFam" id="3.90.226.10:FF:000018">
    <property type="entry name" value="Fatty acid oxidation complex subunit alpha"/>
    <property type="match status" value="1"/>
</dbReference>
<dbReference type="FunFam" id="3.40.50.720:FF:000009">
    <property type="entry name" value="Fatty oxidation complex, alpha subunit"/>
    <property type="match status" value="1"/>
</dbReference>
<dbReference type="Gene3D" id="1.10.1040.50">
    <property type="match status" value="1"/>
</dbReference>
<dbReference type="Gene3D" id="3.90.226.10">
    <property type="entry name" value="2-enoyl-CoA Hydratase, Chain A, domain 1"/>
    <property type="match status" value="1"/>
</dbReference>
<dbReference type="Gene3D" id="3.40.50.720">
    <property type="entry name" value="NAD(P)-binding Rossmann-like Domain"/>
    <property type="match status" value="1"/>
</dbReference>
<dbReference type="HAMAP" id="MF_01621">
    <property type="entry name" value="FadB"/>
    <property type="match status" value="1"/>
</dbReference>
<dbReference type="InterPro" id="IPR006180">
    <property type="entry name" value="3-OHacyl-CoA_DH_CS"/>
</dbReference>
<dbReference type="InterPro" id="IPR006176">
    <property type="entry name" value="3-OHacyl-CoA_DH_NAD-bd"/>
</dbReference>
<dbReference type="InterPro" id="IPR006108">
    <property type="entry name" value="3HC_DH_C"/>
</dbReference>
<dbReference type="InterPro" id="IPR008927">
    <property type="entry name" value="6-PGluconate_DH-like_C_sf"/>
</dbReference>
<dbReference type="InterPro" id="IPR029045">
    <property type="entry name" value="ClpP/crotonase-like_dom_sf"/>
</dbReference>
<dbReference type="InterPro" id="IPR018376">
    <property type="entry name" value="Enoyl-CoA_hyd/isom_CS"/>
</dbReference>
<dbReference type="InterPro" id="IPR001753">
    <property type="entry name" value="Enoyl-CoA_hydra/iso"/>
</dbReference>
<dbReference type="InterPro" id="IPR050136">
    <property type="entry name" value="FA_oxidation_alpha_subunit"/>
</dbReference>
<dbReference type="InterPro" id="IPR012799">
    <property type="entry name" value="FadB"/>
</dbReference>
<dbReference type="InterPro" id="IPR036291">
    <property type="entry name" value="NAD(P)-bd_dom_sf"/>
</dbReference>
<dbReference type="NCBIfam" id="TIGR02437">
    <property type="entry name" value="FadB"/>
    <property type="match status" value="1"/>
</dbReference>
<dbReference type="NCBIfam" id="NF008727">
    <property type="entry name" value="PRK11730.1"/>
    <property type="match status" value="1"/>
</dbReference>
<dbReference type="PANTHER" id="PTHR43612">
    <property type="entry name" value="TRIFUNCTIONAL ENZYME SUBUNIT ALPHA"/>
    <property type="match status" value="1"/>
</dbReference>
<dbReference type="PANTHER" id="PTHR43612:SF3">
    <property type="entry name" value="TRIFUNCTIONAL ENZYME SUBUNIT ALPHA, MITOCHONDRIAL"/>
    <property type="match status" value="1"/>
</dbReference>
<dbReference type="Pfam" id="PF00725">
    <property type="entry name" value="3HCDH"/>
    <property type="match status" value="1"/>
</dbReference>
<dbReference type="Pfam" id="PF02737">
    <property type="entry name" value="3HCDH_N"/>
    <property type="match status" value="1"/>
</dbReference>
<dbReference type="Pfam" id="PF00378">
    <property type="entry name" value="ECH_1"/>
    <property type="match status" value="1"/>
</dbReference>
<dbReference type="SUPFAM" id="SSF48179">
    <property type="entry name" value="6-phosphogluconate dehydrogenase C-terminal domain-like"/>
    <property type="match status" value="2"/>
</dbReference>
<dbReference type="SUPFAM" id="SSF52096">
    <property type="entry name" value="ClpP/crotonase"/>
    <property type="match status" value="1"/>
</dbReference>
<dbReference type="SUPFAM" id="SSF51735">
    <property type="entry name" value="NAD(P)-binding Rossmann-fold domains"/>
    <property type="match status" value="1"/>
</dbReference>
<dbReference type="PROSITE" id="PS00067">
    <property type="entry name" value="3HCDH"/>
    <property type="match status" value="1"/>
</dbReference>
<dbReference type="PROSITE" id="PS00166">
    <property type="entry name" value="ENOYL_COA_HYDRATASE"/>
    <property type="match status" value="1"/>
</dbReference>